<comment type="function">
    <text evidence="1">Probable ATPase of unknown function. Its presence in a non-photosynthetic plant (Epifagus virginiana) and experiments in tobacco indicate that it has an essential function which is probably not related to photosynthesis.</text>
</comment>
<comment type="subcellular location">
    <subcellularLocation>
        <location evidence="1">Plastid</location>
        <location evidence="1">Chloroplast stroma</location>
    </subcellularLocation>
</comment>
<comment type="similarity">
    <text evidence="1">Belongs to the Ycf2 family.</text>
</comment>
<keyword id="KW-0067">ATP-binding</keyword>
<keyword id="KW-0150">Chloroplast</keyword>
<keyword id="KW-0547">Nucleotide-binding</keyword>
<keyword id="KW-0934">Plastid</keyword>
<geneLocation type="chloroplast"/>
<organism>
    <name type="scientific">Jasminum nudiflorum</name>
    <name type="common">Winter jasmine</name>
    <dbReference type="NCBI Taxonomy" id="126431"/>
    <lineage>
        <taxon>Eukaryota</taxon>
        <taxon>Viridiplantae</taxon>
        <taxon>Streptophyta</taxon>
        <taxon>Embryophyta</taxon>
        <taxon>Tracheophyta</taxon>
        <taxon>Spermatophyta</taxon>
        <taxon>Magnoliopsida</taxon>
        <taxon>eudicotyledons</taxon>
        <taxon>Gunneridae</taxon>
        <taxon>Pentapetalae</taxon>
        <taxon>asterids</taxon>
        <taxon>lamiids</taxon>
        <taxon>Lamiales</taxon>
        <taxon>Oleaceae</taxon>
        <taxon>Jasmineae</taxon>
        <taxon>Jasminum</taxon>
    </lineage>
</organism>
<name>YCF2_JASNU</name>
<accession>Q06R68</accession>
<dbReference type="EMBL" id="DQ673255">
    <property type="protein sequence ID" value="ABG74670.1"/>
    <property type="molecule type" value="Genomic_DNA"/>
</dbReference>
<dbReference type="EMBL" id="DQ673255">
    <property type="protein sequence ID" value="ABG74692.1"/>
    <property type="molecule type" value="Genomic_DNA"/>
</dbReference>
<dbReference type="GO" id="GO:0009570">
    <property type="term" value="C:chloroplast stroma"/>
    <property type="evidence" value="ECO:0007669"/>
    <property type="project" value="UniProtKB-SubCell"/>
</dbReference>
<dbReference type="GO" id="GO:0005524">
    <property type="term" value="F:ATP binding"/>
    <property type="evidence" value="ECO:0007669"/>
    <property type="project" value="UniProtKB-KW"/>
</dbReference>
<dbReference type="GO" id="GO:0016887">
    <property type="term" value="F:ATP hydrolysis activity"/>
    <property type="evidence" value="ECO:0007669"/>
    <property type="project" value="InterPro"/>
</dbReference>
<dbReference type="CDD" id="cd19505">
    <property type="entry name" value="RecA-like_Ycf2"/>
    <property type="match status" value="1"/>
</dbReference>
<dbReference type="Gene3D" id="3.40.50.300">
    <property type="entry name" value="P-loop containing nucleotide triphosphate hydrolases"/>
    <property type="match status" value="1"/>
</dbReference>
<dbReference type="HAMAP" id="MF_01330">
    <property type="entry name" value="Ycf2"/>
    <property type="match status" value="1"/>
</dbReference>
<dbReference type="InterPro" id="IPR003593">
    <property type="entry name" value="AAA+_ATPase"/>
</dbReference>
<dbReference type="InterPro" id="IPR003959">
    <property type="entry name" value="ATPase_AAA_core"/>
</dbReference>
<dbReference type="InterPro" id="IPR027417">
    <property type="entry name" value="P-loop_NTPase"/>
</dbReference>
<dbReference type="InterPro" id="IPR008543">
    <property type="entry name" value="Uncharacterised_Ycf2"/>
</dbReference>
<dbReference type="InterPro" id="IPR056777">
    <property type="entry name" value="Ycf2_N"/>
</dbReference>
<dbReference type="PANTHER" id="PTHR33078:SF100">
    <property type="entry name" value="PROTEIN YCF2"/>
    <property type="match status" value="1"/>
</dbReference>
<dbReference type="PANTHER" id="PTHR33078">
    <property type="entry name" value="PROTEIN YCF2-RELATED"/>
    <property type="match status" value="1"/>
</dbReference>
<dbReference type="Pfam" id="PF00004">
    <property type="entry name" value="AAA"/>
    <property type="match status" value="1"/>
</dbReference>
<dbReference type="Pfam" id="PF05695">
    <property type="entry name" value="Ycf2"/>
    <property type="match status" value="5"/>
</dbReference>
<dbReference type="SMART" id="SM00382">
    <property type="entry name" value="AAA"/>
    <property type="match status" value="1"/>
</dbReference>
<dbReference type="SUPFAM" id="SSF52540">
    <property type="entry name" value="P-loop containing nucleoside triphosphate hydrolases"/>
    <property type="match status" value="1"/>
</dbReference>
<proteinExistence type="inferred from homology"/>
<reference key="1">
    <citation type="journal article" date="2007" name="Mol. Biol. Evol.">
        <title>Gene relocations within chloroplast genomes of Jasminum and Menodora (Oleaceae) are due to multiple, overlapping inversions.</title>
        <authorList>
            <person name="Lee H.-L."/>
            <person name="Jansen R.K."/>
            <person name="Chumley T.W."/>
            <person name="Kim K.-J."/>
        </authorList>
    </citation>
    <scope>NUCLEOTIDE SEQUENCE [LARGE SCALE GENOMIC DNA]</scope>
</reference>
<evidence type="ECO:0000255" key="1">
    <source>
        <dbReference type="HAMAP-Rule" id="MF_01330"/>
    </source>
</evidence>
<evidence type="ECO:0000256" key="2">
    <source>
        <dbReference type="SAM" id="MobiDB-lite"/>
    </source>
</evidence>
<gene>
    <name evidence="1" type="primary">ycf2-A</name>
    <name type="ORF">JNC0952</name>
</gene>
<gene>
    <name evidence="1" type="primary">ycf2-B</name>
    <name type="ORF">JNC1568</name>
</gene>
<protein>
    <recommendedName>
        <fullName evidence="1">Protein Ycf2</fullName>
    </recommendedName>
</protein>
<sequence>MNEDTNKERGTIGTVQWRWGERLGEILREIKNSHYFFFFDSFFDSWTQFNSVRSFIPIFFHQERFLKLADPRIWSILLSRTQGSTQGSTSITIKGVILFKGVILFVVAALIYRINNRNMVESKTLYLRGLLPIPMNSIGPRNDTLEESVGSSNINRLIVSLLYLPKGKRISESSFLNPKESTFLNPKESTWVLPITKKSSMPWGSRWWRNWIGKKRDSSQLKGSSYQSRDHLDSISNEDSEYHNQREIPLPEERKIEEFLENPTRSVRSFFSDRWSELHLGSNPTERSTRDQKLLKKQQDLSFVPSRRSEKKEMVHIFKIITYLQNTVSIHPISSDPGCDRVPKDESDMDSSNKISFLNKNPFSEERFQEMANRFTLSITEPDLVYPKGSRFCNESIYRRIIKKWVPRGNVLENLKRTQIVVFVSNNIMEAVNQYRLIRNLIQIQYSTYGYIRNVLNRFFLMNRSDRNFEYGIQRDQIGKGTLNHRTLMKYMINQHLSNFFLKKSPFDSLIVIEKSKNRDPFAYRYKWSNGSKNFQEHLEHFLSEQKSRLEIAFDQFQRNYDKPLPLLLESIASIGLQIVHLKKWKPFLLDDHDTSRKMIDSFHTRNNRRKSFEKTDSYFSMIFDNQDNWLNPVKPFHRSSLISSFFKANRLRFWNNPHHFCFYSNTRFPFSVEKARISNYDFTYGQFLNILFIRNKIFSLCVGKKKHAFGGRDTISPIESQVSNIFIPNYFPSRTIYSIADISGTPLTEEEIVNLERTYCQPLSVSDRNLSDSEGKNLNQYLNFNSSMRLIPTEKDFPWKKPEKRKKRSQKRKKQSPCLPCLLCLCLKKGVEKGEMDRRDSAFSFLSDWKDLFQTYMPWFLTSTGYKHLNGIFLEPFSDLLPILTSSLSSCLSSSLSSSLSSSLSSSLSSLSSSLSSSLSSSLSSSLSSSLSSSLSSSLSSSLSSSLKFVSTFHDSMHEVGISWQILQIELQLRLFHLSHWKWAFQFQWDRLNKILNWINWISEISRKCMYSRLLLEATGMIHGKNESPLIPTHLRSVNVRELLYSILFLLLLAGYLVHTHLVFVSRAFSELQTEFKKLKPFLIPSSRMELEELLDAYPTSEPNPFEFELVKSIRSKKKYWNINLIDFIPHRITLSRKMSHLSHTSKELYSLIRKRENVNIKNANEDGKIDSWVVNSDLFVEEEFFHLLYDRTFMLTTKKSIDPILWSLTHSDHLSTHLSKNDSGYQMIEQPGAIYLRYLVDIHKKSLWNYEFNTSCLAEKRVFLAHYQTITYSQTSCGTNTFHFPSHGKPFSLRLLSPSRGVLVIGSIGTGRSYLVKHLATNSHLPFIRLAVSELLNNNPKFRWIEPEDSWPVFDDLLEHSAYYENRVGDGRDYIIDTIDASDDIDIDIVARGDIDFDKEEELLTRESDEEKKNPVRVQEKYRAEQFEEDLELAKIISPCIIWIPNIHDLNLRESTSLAAGLFVNKYSERCSTRDILVIASTHIPQKVDPSLISTNRLNRCIKVRRFFIPQKEKHVFTLLYTRGFHPHLEKNAFGSITLGSSAQDLRPLINDALLIGISQRKSIIDTNTIRCALHRETWEFQSHPKWVPNSQILFYQIGRAVVQKVLLSNCLSNYLIDPLSIYMKKRSFAGGTEGDSSLYKWYFELGTSLKLVTILLYLLSCSAGSVARDLCFLPGEDRIKLFENEMDSTLFHELLLILLEVLALESPLMGSSRTEKDCSQFDNDRVPFPFRPEPRKLLAIQRFLSEKEEWELAEGKEEGLLQPPQEIEGHIVSAPKIWRPWFCLLDGLDRPVEFLELGYPYCYGYRSFEGKQILFDKEDELEENDSEFLQSFIPRSSDEHGFFKLNQFIWDPPDPLFLLSTDEFPGSVFSYRELFADEELRITKTKLRTFRTRWLSKKAQKGRLELLINRQRWLRPNSDESEDSLYSQILSEIFEYLKNLFLSKRGLLDQTRKVLFRKRWVFPDEMHIFFM</sequence>
<feature type="chain" id="PRO_0000343775" description="Protein Ycf2">
    <location>
        <begin position="1"/>
        <end position="1974"/>
    </location>
</feature>
<feature type="region of interest" description="Disordered" evidence="2">
    <location>
        <begin position="219"/>
        <end position="246"/>
    </location>
</feature>
<feature type="binding site" evidence="1">
    <location>
        <begin position="1308"/>
        <end position="1315"/>
    </location>
    <ligand>
        <name>ATP</name>
        <dbReference type="ChEBI" id="CHEBI:30616"/>
    </ligand>
</feature>